<dbReference type="EMBL" id="AF520617">
    <property type="protein sequence ID" value="AAM78548.1"/>
    <property type="molecule type" value="mRNA"/>
</dbReference>
<dbReference type="EMBL" id="HE600940">
    <property type="protein sequence ID" value="CAP31700.2"/>
    <property type="molecule type" value="Genomic_DNA"/>
</dbReference>
<dbReference type="SMR" id="Q8MUK3"/>
<dbReference type="FunCoup" id="Q8MUK3">
    <property type="interactions" value="1611"/>
</dbReference>
<dbReference type="STRING" id="6238.Q8MUK3"/>
<dbReference type="EnsemblMetazoa" id="CBG12774a.1">
    <property type="protein sequence ID" value="CBG12774a.1"/>
    <property type="gene ID" value="WBGene00033670"/>
</dbReference>
<dbReference type="WormBase" id="CBG12774a">
    <property type="protein sequence ID" value="CBP37596"/>
    <property type="gene ID" value="WBGene00033670"/>
    <property type="gene designation" value="Cbr-cye-1"/>
</dbReference>
<dbReference type="eggNOG" id="KOG0655">
    <property type="taxonomic scope" value="Eukaryota"/>
</dbReference>
<dbReference type="HOGENOM" id="CLU_522999_0_0_1"/>
<dbReference type="InParanoid" id="Q8MUK3"/>
<dbReference type="OMA" id="VLVDWMM"/>
<dbReference type="Proteomes" id="UP000008549">
    <property type="component" value="Unassembled WGS sequence"/>
</dbReference>
<dbReference type="GO" id="GO:0005814">
    <property type="term" value="C:centriole"/>
    <property type="evidence" value="ECO:0007669"/>
    <property type="project" value="UniProtKB-SubCell"/>
</dbReference>
<dbReference type="GO" id="GO:0000785">
    <property type="term" value="C:chromatin"/>
    <property type="evidence" value="ECO:0007669"/>
    <property type="project" value="EnsemblMetazoa"/>
</dbReference>
<dbReference type="GO" id="GO:0097134">
    <property type="term" value="C:cyclin E1-CDK2 complex"/>
    <property type="evidence" value="ECO:0000318"/>
    <property type="project" value="GO_Central"/>
</dbReference>
<dbReference type="GO" id="GO:0005737">
    <property type="term" value="C:cytoplasm"/>
    <property type="evidence" value="ECO:0000318"/>
    <property type="project" value="GO_Central"/>
</dbReference>
<dbReference type="GO" id="GO:0005815">
    <property type="term" value="C:microtubule organizing center"/>
    <property type="evidence" value="ECO:0000318"/>
    <property type="project" value="GO_Central"/>
</dbReference>
<dbReference type="GO" id="GO:0005634">
    <property type="term" value="C:nucleus"/>
    <property type="evidence" value="ECO:0000250"/>
    <property type="project" value="UniProtKB"/>
</dbReference>
<dbReference type="GO" id="GO:0016538">
    <property type="term" value="F:cyclin-dependent protein serine/threonine kinase regulator activity"/>
    <property type="evidence" value="ECO:0000250"/>
    <property type="project" value="UniProtKB"/>
</dbReference>
<dbReference type="GO" id="GO:0051301">
    <property type="term" value="P:cell division"/>
    <property type="evidence" value="ECO:0007669"/>
    <property type="project" value="UniProtKB-KW"/>
</dbReference>
<dbReference type="GO" id="GO:0042023">
    <property type="term" value="P:DNA endoreduplication"/>
    <property type="evidence" value="ECO:0007669"/>
    <property type="project" value="EnsemblMetazoa"/>
</dbReference>
<dbReference type="GO" id="GO:0009792">
    <property type="term" value="P:embryo development ending in birth or egg hatching"/>
    <property type="evidence" value="ECO:0007669"/>
    <property type="project" value="EnsemblMetazoa"/>
</dbReference>
<dbReference type="GO" id="GO:0000082">
    <property type="term" value="P:G1/S transition of mitotic cell cycle"/>
    <property type="evidence" value="ECO:0000250"/>
    <property type="project" value="UniProtKB"/>
</dbReference>
<dbReference type="GO" id="GO:0007281">
    <property type="term" value="P:germ cell development"/>
    <property type="evidence" value="ECO:0007669"/>
    <property type="project" value="EnsemblMetazoa"/>
</dbReference>
<dbReference type="GO" id="GO:0051729">
    <property type="term" value="P:germline cell cycle switching, mitotic to meiotic cell cycle"/>
    <property type="evidence" value="ECO:0007669"/>
    <property type="project" value="EnsemblMetazoa"/>
</dbReference>
<dbReference type="GO" id="GO:0008406">
    <property type="term" value="P:gonad development"/>
    <property type="evidence" value="ECO:0007669"/>
    <property type="project" value="EnsemblMetazoa"/>
</dbReference>
<dbReference type="GO" id="GO:0051321">
    <property type="term" value="P:meiotic cell cycle"/>
    <property type="evidence" value="ECO:0007669"/>
    <property type="project" value="UniProtKB-KW"/>
</dbReference>
<dbReference type="GO" id="GO:0008284">
    <property type="term" value="P:positive regulation of cell population proliferation"/>
    <property type="evidence" value="ECO:0007669"/>
    <property type="project" value="EnsemblMetazoa"/>
</dbReference>
<dbReference type="GO" id="GO:1900087">
    <property type="term" value="P:positive regulation of G1/S transition of mitotic cell cycle"/>
    <property type="evidence" value="ECO:0000318"/>
    <property type="project" value="GO_Central"/>
</dbReference>
<dbReference type="GO" id="GO:1904781">
    <property type="term" value="P:positive regulation of protein localization to centrosome"/>
    <property type="evidence" value="ECO:0007669"/>
    <property type="project" value="EnsemblMetazoa"/>
</dbReference>
<dbReference type="GO" id="GO:0040026">
    <property type="term" value="P:positive regulation of vulval development"/>
    <property type="evidence" value="ECO:0007669"/>
    <property type="project" value="EnsemblMetazoa"/>
</dbReference>
<dbReference type="GO" id="GO:0009791">
    <property type="term" value="P:post-embryonic development"/>
    <property type="evidence" value="ECO:0007669"/>
    <property type="project" value="EnsemblMetazoa"/>
</dbReference>
<dbReference type="GO" id="GO:0010608">
    <property type="term" value="P:post-transcriptional regulation of gene expression"/>
    <property type="evidence" value="ECO:0007669"/>
    <property type="project" value="EnsemblMetazoa"/>
</dbReference>
<dbReference type="GO" id="GO:0007088">
    <property type="term" value="P:regulation of mitotic nuclear division"/>
    <property type="evidence" value="ECO:0000250"/>
    <property type="project" value="UniProtKB"/>
</dbReference>
<dbReference type="GO" id="GO:1904776">
    <property type="term" value="P:regulation of protein localization to cell cortex"/>
    <property type="evidence" value="ECO:0007669"/>
    <property type="project" value="EnsemblMetazoa"/>
</dbReference>
<dbReference type="CDD" id="cd20520">
    <property type="entry name" value="CYCLIN_CCNE_rpt2"/>
    <property type="match status" value="1"/>
</dbReference>
<dbReference type="FunFam" id="1.10.472.10:FF:000001">
    <property type="entry name" value="G2/mitotic-specific cyclin"/>
    <property type="match status" value="1"/>
</dbReference>
<dbReference type="Gene3D" id="1.10.472.10">
    <property type="entry name" value="Cyclin-like"/>
    <property type="match status" value="2"/>
</dbReference>
<dbReference type="InterPro" id="IPR039361">
    <property type="entry name" value="Cyclin"/>
</dbReference>
<dbReference type="InterPro" id="IPR013763">
    <property type="entry name" value="Cyclin-like_dom"/>
</dbReference>
<dbReference type="InterPro" id="IPR036915">
    <property type="entry name" value="Cyclin-like_sf"/>
</dbReference>
<dbReference type="InterPro" id="IPR006671">
    <property type="entry name" value="Cyclin_N"/>
</dbReference>
<dbReference type="PANTHER" id="PTHR10177">
    <property type="entry name" value="CYCLINS"/>
    <property type="match status" value="1"/>
</dbReference>
<dbReference type="Pfam" id="PF00134">
    <property type="entry name" value="Cyclin_N"/>
    <property type="match status" value="1"/>
</dbReference>
<dbReference type="SMART" id="SM00385">
    <property type="entry name" value="CYCLIN"/>
    <property type="match status" value="1"/>
</dbReference>
<dbReference type="SUPFAM" id="SSF47954">
    <property type="entry name" value="Cyclin-like"/>
    <property type="match status" value="2"/>
</dbReference>
<organism evidence="5">
    <name type="scientific">Caenorhabditis briggsae</name>
    <dbReference type="NCBI Taxonomy" id="6238"/>
    <lineage>
        <taxon>Eukaryota</taxon>
        <taxon>Metazoa</taxon>
        <taxon>Ecdysozoa</taxon>
        <taxon>Nematoda</taxon>
        <taxon>Chromadorea</taxon>
        <taxon>Rhabditida</taxon>
        <taxon>Rhabditina</taxon>
        <taxon>Rhabditomorpha</taxon>
        <taxon>Rhabditoidea</taxon>
        <taxon>Rhabditidae</taxon>
        <taxon>Peloderinae</taxon>
        <taxon>Caenorhabditis</taxon>
    </lineage>
</organism>
<protein>
    <recommendedName>
        <fullName>G1/S-specific cyclin-E</fullName>
    </recommendedName>
</protein>
<comment type="function">
    <text evidence="1">Essential for the control of the cell cycle at the G1/S (start) transition. In association with cdk-2, regulates proliferation, quiescent state and cell fate during the development of several cell lineages. In the embryo, initiates the establishment of cell polarity through the recruitment of the centrosomal proteins spd-2 and spd-5 during prophase. During the development of the vulva, controls the onset of vulval cell terminal differentiation by controlling the duration of G1 phase. During hypoderm development at early larval stages, controls syncytial fate of seam cell daughter cells. Involved in the progression of cell division in the intestinal lineage in larvae, and in particular in endoreplication, a specific growth pathway in the intestinal epithelium, required for feeding and gut development in growing larvae. By controlling the activity of translational repressor gld-1, regulates the pool of germline stem cells and the size of the mitotic zone by preventing entry into meiosis. In addition, repression of expression by gld-1 prevents mitosis re-entry in meiotic germline cells.</text>
</comment>
<comment type="subunit">
    <text evidence="2">Interacts with a member of the CDK2/CDK protein kinases to form a serine/threonine kinase holoenzyme complex. The cyclin subunit imparts substrate specificity to the complex (By similarity).</text>
</comment>
<comment type="subcellular location">
    <subcellularLocation>
        <location evidence="1">Nucleus</location>
    </subcellularLocation>
    <subcellularLocation>
        <location evidence="1">Cytoplasm</location>
        <location evidence="1">Cytoskeleton</location>
        <location evidence="1">Microtubule organizing center</location>
        <location evidence="1">Centrosome</location>
        <location evidence="1">Centriole</location>
    </subcellularLocation>
    <text evidence="1">Co-localizes with cdk-2, in the sperm centrioles before the first embryonic mitosis and then to the male and female nuclei upon entry into mitosis.</text>
</comment>
<comment type="similarity">
    <text evidence="4">Belongs to the cyclin family. Cyclin E subfamily.</text>
</comment>
<accession>Q8MUK3</accession>
<accession>A8XGJ4</accession>
<accession>Q61CT3</accession>
<reference evidence="4" key="1">
    <citation type="journal article" date="2003" name="Dev. Biol.">
        <title>Cyclin E expression during development in Caenorhabditis elegans.</title>
        <authorList>
            <person name="Brodigan T.M."/>
            <person name="Liu J."/>
            <person name="Park M."/>
            <person name="Kipreos E.T."/>
            <person name="Krause M."/>
        </authorList>
    </citation>
    <scope>NUCLEOTIDE SEQUENCE [MRNA]</scope>
</reference>
<reference key="2">
    <citation type="journal article" date="2003" name="PLoS Biol.">
        <title>The genome sequence of Caenorhabditis briggsae: a platform for comparative genomics.</title>
        <authorList>
            <person name="Stein L.D."/>
            <person name="Bao Z."/>
            <person name="Blasiar D."/>
            <person name="Blumenthal T."/>
            <person name="Brent M.R."/>
            <person name="Chen N."/>
            <person name="Chinwalla A."/>
            <person name="Clarke L."/>
            <person name="Clee C."/>
            <person name="Coghlan A."/>
            <person name="Coulson A."/>
            <person name="D'Eustachio P."/>
            <person name="Fitch D.H.A."/>
            <person name="Fulton L.A."/>
            <person name="Fulton R.E."/>
            <person name="Griffiths-Jones S."/>
            <person name="Harris T.W."/>
            <person name="Hillier L.W."/>
            <person name="Kamath R."/>
            <person name="Kuwabara P.E."/>
            <person name="Mardis E.R."/>
            <person name="Marra M.A."/>
            <person name="Miner T.L."/>
            <person name="Minx P."/>
            <person name="Mullikin J.C."/>
            <person name="Plumb R.W."/>
            <person name="Rogers J."/>
            <person name="Schein J.E."/>
            <person name="Sohrmann M."/>
            <person name="Spieth J."/>
            <person name="Stajich J.E."/>
            <person name="Wei C."/>
            <person name="Willey D."/>
            <person name="Wilson R.K."/>
            <person name="Durbin R.M."/>
            <person name="Waterston R.H."/>
        </authorList>
    </citation>
    <scope>NUCLEOTIDE SEQUENCE [LARGE SCALE GENOMIC DNA]</scope>
    <source>
        <strain>AF16</strain>
    </source>
</reference>
<gene>
    <name type="primary">cye-1</name>
    <name type="ORF">CBG12774</name>
</gene>
<proteinExistence type="evidence at transcript level"/>
<sequence>MAGRKSSRTTGEPVKKAERKSAILSPHDELRERLLETSLDVKENIPERSSSTRNESVGSQRSDCSESRKRRSTEKGPVAKRPSTEKKGNGSRDDSFSSVFSEDRETESSVGSTSSRTRGQPLPAMPEEEESLDGSSDHNAESEESRETPQSDEHDGFEEDGDVEDDVSSDVNDEEDEYDEYEEDEETEDEFDLPLQNDDFAVTKRLMNDRHMIDAPSLLSYGKCEGIGSPTKVWSLMVKRDDIPRATRQLLRNHPDMTINMRRVLVDWMMECCDVEKLHRETFHLAVDYADRFLESTREEVISENFQLVGTAALFIAAKYEEIYPPKCADLAALTDGAFSCDDICRMESIVAKDLKWSFGPITSVQWLSTYLQLLGTGKKNNDHFEEGNMYIPELLRSEYLRMVRILDYLLSDIDSFNFSYRTIAAAVLFVNYDPRSAVEKATGFIYEQLRNVIDYVTPICRAYDRFTQEHVPKDIIPDYAPAEDAHNIQVHIKHYEVDPYVEKERERRHRRGPNRRL</sequence>
<keyword id="KW-0131">Cell cycle</keyword>
<keyword id="KW-0132">Cell division</keyword>
<keyword id="KW-0195">Cyclin</keyword>
<keyword id="KW-0963">Cytoplasm</keyword>
<keyword id="KW-0206">Cytoskeleton</keyword>
<keyword id="KW-0469">Meiosis</keyword>
<keyword id="KW-0498">Mitosis</keyword>
<keyword id="KW-0539">Nucleus</keyword>
<keyword id="KW-1185">Reference proteome</keyword>
<feature type="chain" id="PRO_0000080457" description="G1/S-specific cyclin-E">
    <location>
        <begin position="1"/>
        <end position="518"/>
    </location>
</feature>
<feature type="region of interest" description="Disordered" evidence="3">
    <location>
        <begin position="1"/>
        <end position="193"/>
    </location>
</feature>
<feature type="compositionally biased region" description="Basic and acidic residues" evidence="3">
    <location>
        <begin position="13"/>
        <end position="46"/>
    </location>
</feature>
<feature type="compositionally biased region" description="Polar residues" evidence="3">
    <location>
        <begin position="47"/>
        <end position="62"/>
    </location>
</feature>
<feature type="compositionally biased region" description="Basic and acidic residues" evidence="3">
    <location>
        <begin position="82"/>
        <end position="107"/>
    </location>
</feature>
<feature type="compositionally biased region" description="Low complexity" evidence="3">
    <location>
        <begin position="108"/>
        <end position="119"/>
    </location>
</feature>
<feature type="compositionally biased region" description="Basic and acidic residues" evidence="3">
    <location>
        <begin position="135"/>
        <end position="154"/>
    </location>
</feature>
<feature type="compositionally biased region" description="Acidic residues" evidence="3">
    <location>
        <begin position="155"/>
        <end position="192"/>
    </location>
</feature>
<name>CCNE_CAEBR</name>
<evidence type="ECO:0000250" key="1">
    <source>
        <dbReference type="UniProtKB" id="O01501"/>
    </source>
</evidence>
<evidence type="ECO:0000250" key="2">
    <source>
        <dbReference type="UniProtKB" id="P24864"/>
    </source>
</evidence>
<evidence type="ECO:0000256" key="3">
    <source>
        <dbReference type="SAM" id="MobiDB-lite"/>
    </source>
</evidence>
<evidence type="ECO:0000305" key="4"/>
<evidence type="ECO:0000312" key="5">
    <source>
        <dbReference type="EMBL" id="AAM78548.1"/>
    </source>
</evidence>